<protein>
    <recommendedName>
        <fullName evidence="1">Hydroxyethylthiazole kinase</fullName>
        <ecNumber evidence="1">2.7.1.50</ecNumber>
    </recommendedName>
    <alternativeName>
        <fullName evidence="1">4-methyl-5-beta-hydroxyethylthiazole kinase</fullName>
        <shortName evidence="1">TH kinase</shortName>
        <shortName evidence="1">Thz kinase</shortName>
    </alternativeName>
</protein>
<sequence>MELVRQNNPLIHCMTNDVVMNFTANGLLAIGASPVMAFSAAETEDMASVADALLLNIGTPSNEGVDSMVLAGKAANRAGKPVIFDPVGVGATPFRNEISKRILNEVDVAVVRGNAGEIAALLGQAGTVKGVDGKINADVKELCLQAAKALRTVVVVTGEVDAVSNGEQLVAVANGHEWLTKVVGTGCLLGGVIAAYAAVQPNSLVDAAVEALAFYGVCAEQAYEQTKKEGIGSFQQTFLNELGNMTDEKAAALKRVEQIC</sequence>
<gene>
    <name evidence="1" type="primary">thiM</name>
    <name type="ordered locus">ABC2912</name>
</gene>
<accession>Q5WDW4</accession>
<proteinExistence type="inferred from homology"/>
<comment type="function">
    <text evidence="1">Catalyzes the phosphorylation of the hydroxyl group of 4-methyl-5-beta-hydroxyethylthiazole (THZ).</text>
</comment>
<comment type="catalytic activity">
    <reaction evidence="1">
        <text>5-(2-hydroxyethyl)-4-methylthiazole + ATP = 4-methyl-5-(2-phosphooxyethyl)-thiazole + ADP + H(+)</text>
        <dbReference type="Rhea" id="RHEA:24212"/>
        <dbReference type="ChEBI" id="CHEBI:15378"/>
        <dbReference type="ChEBI" id="CHEBI:17957"/>
        <dbReference type="ChEBI" id="CHEBI:30616"/>
        <dbReference type="ChEBI" id="CHEBI:58296"/>
        <dbReference type="ChEBI" id="CHEBI:456216"/>
        <dbReference type="EC" id="2.7.1.50"/>
    </reaction>
</comment>
<comment type="cofactor">
    <cofactor evidence="1">
        <name>Mg(2+)</name>
        <dbReference type="ChEBI" id="CHEBI:18420"/>
    </cofactor>
</comment>
<comment type="pathway">
    <text evidence="1">Cofactor biosynthesis; thiamine diphosphate biosynthesis; 4-methyl-5-(2-phosphoethyl)-thiazole from 5-(2-hydroxyethyl)-4-methylthiazole: step 1/1.</text>
</comment>
<comment type="similarity">
    <text evidence="1">Belongs to the Thz kinase family.</text>
</comment>
<keyword id="KW-0067">ATP-binding</keyword>
<keyword id="KW-0418">Kinase</keyword>
<keyword id="KW-0460">Magnesium</keyword>
<keyword id="KW-0479">Metal-binding</keyword>
<keyword id="KW-0547">Nucleotide-binding</keyword>
<keyword id="KW-1185">Reference proteome</keyword>
<keyword id="KW-0784">Thiamine biosynthesis</keyword>
<keyword id="KW-0808">Transferase</keyword>
<reference key="1">
    <citation type="submission" date="2003-10" db="EMBL/GenBank/DDBJ databases">
        <title>The complete genome sequence of the alkaliphilic Bacillus clausii KSM-K16.</title>
        <authorList>
            <person name="Takaki Y."/>
            <person name="Kageyama Y."/>
            <person name="Shimamura S."/>
            <person name="Suzuki H."/>
            <person name="Nishi S."/>
            <person name="Hatada Y."/>
            <person name="Kawai S."/>
            <person name="Ito S."/>
            <person name="Horikoshi K."/>
        </authorList>
    </citation>
    <scope>NUCLEOTIDE SEQUENCE [LARGE SCALE GENOMIC DNA]</scope>
    <source>
        <strain>KSM-K16</strain>
    </source>
</reference>
<evidence type="ECO:0000255" key="1">
    <source>
        <dbReference type="HAMAP-Rule" id="MF_00228"/>
    </source>
</evidence>
<name>THIM_SHOC1</name>
<dbReference type="EC" id="2.7.1.50" evidence="1"/>
<dbReference type="EMBL" id="AP006627">
    <property type="protein sequence ID" value="BAD65446.1"/>
    <property type="molecule type" value="Genomic_DNA"/>
</dbReference>
<dbReference type="RefSeq" id="WP_011247754.1">
    <property type="nucleotide sequence ID" value="NC_006582.1"/>
</dbReference>
<dbReference type="SMR" id="Q5WDW4"/>
<dbReference type="STRING" id="66692.ABC2912"/>
<dbReference type="KEGG" id="bcl:ABC2912"/>
<dbReference type="eggNOG" id="COG2145">
    <property type="taxonomic scope" value="Bacteria"/>
</dbReference>
<dbReference type="HOGENOM" id="CLU_019943_0_0_9"/>
<dbReference type="OrthoDB" id="9778146at2"/>
<dbReference type="UniPathway" id="UPA00060">
    <property type="reaction ID" value="UER00139"/>
</dbReference>
<dbReference type="Proteomes" id="UP000001168">
    <property type="component" value="Chromosome"/>
</dbReference>
<dbReference type="GO" id="GO:0005524">
    <property type="term" value="F:ATP binding"/>
    <property type="evidence" value="ECO:0007669"/>
    <property type="project" value="UniProtKB-UniRule"/>
</dbReference>
<dbReference type="GO" id="GO:0004417">
    <property type="term" value="F:hydroxyethylthiazole kinase activity"/>
    <property type="evidence" value="ECO:0007669"/>
    <property type="project" value="UniProtKB-UniRule"/>
</dbReference>
<dbReference type="GO" id="GO:0000287">
    <property type="term" value="F:magnesium ion binding"/>
    <property type="evidence" value="ECO:0007669"/>
    <property type="project" value="UniProtKB-UniRule"/>
</dbReference>
<dbReference type="GO" id="GO:0009228">
    <property type="term" value="P:thiamine biosynthetic process"/>
    <property type="evidence" value="ECO:0007669"/>
    <property type="project" value="UniProtKB-KW"/>
</dbReference>
<dbReference type="GO" id="GO:0009229">
    <property type="term" value="P:thiamine diphosphate biosynthetic process"/>
    <property type="evidence" value="ECO:0007669"/>
    <property type="project" value="UniProtKB-UniRule"/>
</dbReference>
<dbReference type="CDD" id="cd01170">
    <property type="entry name" value="THZ_kinase"/>
    <property type="match status" value="1"/>
</dbReference>
<dbReference type="Gene3D" id="3.40.1190.20">
    <property type="match status" value="1"/>
</dbReference>
<dbReference type="HAMAP" id="MF_00228">
    <property type="entry name" value="Thz_kinase"/>
    <property type="match status" value="1"/>
</dbReference>
<dbReference type="InterPro" id="IPR000417">
    <property type="entry name" value="Hyethyz_kinase"/>
</dbReference>
<dbReference type="InterPro" id="IPR029056">
    <property type="entry name" value="Ribokinase-like"/>
</dbReference>
<dbReference type="NCBIfam" id="NF006830">
    <property type="entry name" value="PRK09355.1"/>
    <property type="match status" value="1"/>
</dbReference>
<dbReference type="NCBIfam" id="TIGR00694">
    <property type="entry name" value="thiM"/>
    <property type="match status" value="1"/>
</dbReference>
<dbReference type="Pfam" id="PF02110">
    <property type="entry name" value="HK"/>
    <property type="match status" value="1"/>
</dbReference>
<dbReference type="PIRSF" id="PIRSF000513">
    <property type="entry name" value="Thz_kinase"/>
    <property type="match status" value="1"/>
</dbReference>
<dbReference type="PRINTS" id="PR01099">
    <property type="entry name" value="HYETHTZKNASE"/>
</dbReference>
<dbReference type="SUPFAM" id="SSF53613">
    <property type="entry name" value="Ribokinase-like"/>
    <property type="match status" value="1"/>
</dbReference>
<feature type="chain" id="PRO_0000336545" description="Hydroxyethylthiazole kinase">
    <location>
        <begin position="1"/>
        <end position="260"/>
    </location>
</feature>
<feature type="binding site" evidence="1">
    <location>
        <position position="36"/>
    </location>
    <ligand>
        <name>substrate</name>
    </ligand>
</feature>
<feature type="binding site" evidence="1">
    <location>
        <position position="112"/>
    </location>
    <ligand>
        <name>ATP</name>
        <dbReference type="ChEBI" id="CHEBI:30616"/>
    </ligand>
</feature>
<feature type="binding site" evidence="1">
    <location>
        <position position="157"/>
    </location>
    <ligand>
        <name>ATP</name>
        <dbReference type="ChEBI" id="CHEBI:30616"/>
    </ligand>
</feature>
<feature type="binding site" evidence="1">
    <location>
        <position position="184"/>
    </location>
    <ligand>
        <name>substrate</name>
    </ligand>
</feature>
<organism>
    <name type="scientific">Shouchella clausii (strain KSM-K16)</name>
    <name type="common">Alkalihalobacillus clausii</name>
    <dbReference type="NCBI Taxonomy" id="66692"/>
    <lineage>
        <taxon>Bacteria</taxon>
        <taxon>Bacillati</taxon>
        <taxon>Bacillota</taxon>
        <taxon>Bacilli</taxon>
        <taxon>Bacillales</taxon>
        <taxon>Bacillaceae</taxon>
        <taxon>Shouchella</taxon>
    </lineage>
</organism>